<sequence>MMNSSQTLVVKLGTSVLTGGSRRLNRAHIVELVRQCAQQHEKGHRIIIVTSGAIAAGREHLGYPDLPATIASKQLLAAVGQSRLIQLWEQFFSIYGIHVGQMLLTRADLEDRERFLNARDTLQALLDNRIVPVINENDAVATAEIKVGDNDNLSALAAILGGADKLLLLTDIEGLYTADPRNNPDAKLIPEVYDISDELRMVAGDSISGLGTGGMATKLQAAGIAGRAGIDVIIAAGNKPDVISDVIEGNPVGTRFHGLESPMENRKRWIFGAPPAGEIIVDHGAETAICEKGSSLLPKGIKNIKGDFSRGEVICIRSLSGKDLAHGVCRYNSDALRLIAGHHSQQISQILGYEYGAVAVHRDDMIVS</sequence>
<protein>
    <recommendedName>
        <fullName evidence="1">Glutamate 5-kinase</fullName>
        <ecNumber evidence="1">2.7.2.11</ecNumber>
    </recommendedName>
    <alternativeName>
        <fullName evidence="1">Gamma-glutamyl kinase</fullName>
        <shortName evidence="1">GK</shortName>
    </alternativeName>
</protein>
<reference key="1">
    <citation type="journal article" date="2003" name="Nat. Biotechnol.">
        <title>The genome sequence of the entomopathogenic bacterium Photorhabdus luminescens.</title>
        <authorList>
            <person name="Duchaud E."/>
            <person name="Rusniok C."/>
            <person name="Frangeul L."/>
            <person name="Buchrieser C."/>
            <person name="Givaudan A."/>
            <person name="Taourit S."/>
            <person name="Bocs S."/>
            <person name="Boursaux-Eude C."/>
            <person name="Chandler M."/>
            <person name="Charles J.-F."/>
            <person name="Dassa E."/>
            <person name="Derose R."/>
            <person name="Derzelle S."/>
            <person name="Freyssinet G."/>
            <person name="Gaudriault S."/>
            <person name="Medigue C."/>
            <person name="Lanois A."/>
            <person name="Powell K."/>
            <person name="Siguier P."/>
            <person name="Vincent R."/>
            <person name="Wingate V."/>
            <person name="Zouine M."/>
            <person name="Glaser P."/>
            <person name="Boemare N."/>
            <person name="Danchin A."/>
            <person name="Kunst F."/>
        </authorList>
    </citation>
    <scope>NUCLEOTIDE SEQUENCE [LARGE SCALE GENOMIC DNA]</scope>
    <source>
        <strain>DSM 15139 / CIP 105565 / TT01</strain>
    </source>
</reference>
<dbReference type="EC" id="2.7.2.11" evidence="1"/>
<dbReference type="EMBL" id="BX571863">
    <property type="protein sequence ID" value="CAE13537.1"/>
    <property type="molecule type" value="Genomic_DNA"/>
</dbReference>
<dbReference type="SMR" id="Q7N7B2"/>
<dbReference type="STRING" id="243265.plu1243"/>
<dbReference type="KEGG" id="plu:plu1243"/>
<dbReference type="eggNOG" id="COG0263">
    <property type="taxonomic scope" value="Bacteria"/>
</dbReference>
<dbReference type="HOGENOM" id="CLU_025400_2_0_6"/>
<dbReference type="UniPathway" id="UPA00098">
    <property type="reaction ID" value="UER00359"/>
</dbReference>
<dbReference type="Proteomes" id="UP000002514">
    <property type="component" value="Chromosome"/>
</dbReference>
<dbReference type="GO" id="GO:0005829">
    <property type="term" value="C:cytosol"/>
    <property type="evidence" value="ECO:0007669"/>
    <property type="project" value="TreeGrafter"/>
</dbReference>
<dbReference type="GO" id="GO:0005524">
    <property type="term" value="F:ATP binding"/>
    <property type="evidence" value="ECO:0007669"/>
    <property type="project" value="UniProtKB-KW"/>
</dbReference>
<dbReference type="GO" id="GO:0004349">
    <property type="term" value="F:glutamate 5-kinase activity"/>
    <property type="evidence" value="ECO:0007669"/>
    <property type="project" value="UniProtKB-UniRule"/>
</dbReference>
<dbReference type="GO" id="GO:0003723">
    <property type="term" value="F:RNA binding"/>
    <property type="evidence" value="ECO:0007669"/>
    <property type="project" value="InterPro"/>
</dbReference>
<dbReference type="GO" id="GO:0055129">
    <property type="term" value="P:L-proline biosynthetic process"/>
    <property type="evidence" value="ECO:0007669"/>
    <property type="project" value="UniProtKB-UniRule"/>
</dbReference>
<dbReference type="CDD" id="cd04242">
    <property type="entry name" value="AAK_G5K_ProB"/>
    <property type="match status" value="1"/>
</dbReference>
<dbReference type="CDD" id="cd21157">
    <property type="entry name" value="PUA_G5K"/>
    <property type="match status" value="1"/>
</dbReference>
<dbReference type="FunFam" id="2.30.130.10:FF:000003">
    <property type="entry name" value="Glutamate 5-kinase"/>
    <property type="match status" value="1"/>
</dbReference>
<dbReference type="FunFam" id="3.40.1160.10:FF:000006">
    <property type="entry name" value="Glutamate 5-kinase"/>
    <property type="match status" value="1"/>
</dbReference>
<dbReference type="Gene3D" id="3.40.1160.10">
    <property type="entry name" value="Acetylglutamate kinase-like"/>
    <property type="match status" value="2"/>
</dbReference>
<dbReference type="Gene3D" id="2.30.130.10">
    <property type="entry name" value="PUA domain"/>
    <property type="match status" value="1"/>
</dbReference>
<dbReference type="HAMAP" id="MF_00456">
    <property type="entry name" value="ProB"/>
    <property type="match status" value="1"/>
</dbReference>
<dbReference type="InterPro" id="IPR036393">
    <property type="entry name" value="AceGlu_kinase-like_sf"/>
</dbReference>
<dbReference type="InterPro" id="IPR001048">
    <property type="entry name" value="Asp/Glu/Uridylate_kinase"/>
</dbReference>
<dbReference type="InterPro" id="IPR041739">
    <property type="entry name" value="G5K_ProB"/>
</dbReference>
<dbReference type="InterPro" id="IPR001057">
    <property type="entry name" value="Glu/AcGlu_kinase"/>
</dbReference>
<dbReference type="InterPro" id="IPR011529">
    <property type="entry name" value="Glu_5kinase"/>
</dbReference>
<dbReference type="InterPro" id="IPR005715">
    <property type="entry name" value="Glu_5kinase/COase_Synthase"/>
</dbReference>
<dbReference type="InterPro" id="IPR019797">
    <property type="entry name" value="Glutamate_5-kinase_CS"/>
</dbReference>
<dbReference type="InterPro" id="IPR002478">
    <property type="entry name" value="PUA"/>
</dbReference>
<dbReference type="InterPro" id="IPR015947">
    <property type="entry name" value="PUA-like_sf"/>
</dbReference>
<dbReference type="InterPro" id="IPR036974">
    <property type="entry name" value="PUA_sf"/>
</dbReference>
<dbReference type="NCBIfam" id="TIGR01027">
    <property type="entry name" value="proB"/>
    <property type="match status" value="1"/>
</dbReference>
<dbReference type="PANTHER" id="PTHR43654">
    <property type="entry name" value="GLUTAMATE 5-KINASE"/>
    <property type="match status" value="1"/>
</dbReference>
<dbReference type="PANTHER" id="PTHR43654:SF1">
    <property type="entry name" value="ISOPENTENYL PHOSPHATE KINASE"/>
    <property type="match status" value="1"/>
</dbReference>
<dbReference type="Pfam" id="PF00696">
    <property type="entry name" value="AA_kinase"/>
    <property type="match status" value="1"/>
</dbReference>
<dbReference type="Pfam" id="PF01472">
    <property type="entry name" value="PUA"/>
    <property type="match status" value="1"/>
</dbReference>
<dbReference type="PIRSF" id="PIRSF000729">
    <property type="entry name" value="GK"/>
    <property type="match status" value="1"/>
</dbReference>
<dbReference type="PRINTS" id="PR00474">
    <property type="entry name" value="GLU5KINASE"/>
</dbReference>
<dbReference type="SMART" id="SM00359">
    <property type="entry name" value="PUA"/>
    <property type="match status" value="1"/>
</dbReference>
<dbReference type="SUPFAM" id="SSF53633">
    <property type="entry name" value="Carbamate kinase-like"/>
    <property type="match status" value="1"/>
</dbReference>
<dbReference type="SUPFAM" id="SSF88697">
    <property type="entry name" value="PUA domain-like"/>
    <property type="match status" value="1"/>
</dbReference>
<dbReference type="PROSITE" id="PS00902">
    <property type="entry name" value="GLUTAMATE_5_KINASE"/>
    <property type="match status" value="1"/>
</dbReference>
<dbReference type="PROSITE" id="PS50890">
    <property type="entry name" value="PUA"/>
    <property type="match status" value="1"/>
</dbReference>
<proteinExistence type="inferred from homology"/>
<accession>Q7N7B2</accession>
<feature type="chain" id="PRO_0000109703" description="Glutamate 5-kinase">
    <location>
        <begin position="1"/>
        <end position="368"/>
    </location>
</feature>
<feature type="domain" description="PUA" evidence="1">
    <location>
        <begin position="276"/>
        <end position="354"/>
    </location>
</feature>
<feature type="binding site" evidence="1">
    <location>
        <position position="11"/>
    </location>
    <ligand>
        <name>ATP</name>
        <dbReference type="ChEBI" id="CHEBI:30616"/>
    </ligand>
</feature>
<feature type="binding site" evidence="1">
    <location>
        <position position="51"/>
    </location>
    <ligand>
        <name>substrate</name>
    </ligand>
</feature>
<feature type="binding site" evidence="1">
    <location>
        <position position="138"/>
    </location>
    <ligand>
        <name>substrate</name>
    </ligand>
</feature>
<feature type="binding site" evidence="1">
    <location>
        <position position="150"/>
    </location>
    <ligand>
        <name>substrate</name>
    </ligand>
</feature>
<feature type="binding site" evidence="1">
    <location>
        <begin position="170"/>
        <end position="171"/>
    </location>
    <ligand>
        <name>ATP</name>
        <dbReference type="ChEBI" id="CHEBI:30616"/>
    </ligand>
</feature>
<feature type="binding site" evidence="1">
    <location>
        <begin position="212"/>
        <end position="218"/>
    </location>
    <ligand>
        <name>ATP</name>
        <dbReference type="ChEBI" id="CHEBI:30616"/>
    </ligand>
</feature>
<organism>
    <name type="scientific">Photorhabdus laumondii subsp. laumondii (strain DSM 15139 / CIP 105565 / TT01)</name>
    <name type="common">Photorhabdus luminescens subsp. laumondii</name>
    <dbReference type="NCBI Taxonomy" id="243265"/>
    <lineage>
        <taxon>Bacteria</taxon>
        <taxon>Pseudomonadati</taxon>
        <taxon>Pseudomonadota</taxon>
        <taxon>Gammaproteobacteria</taxon>
        <taxon>Enterobacterales</taxon>
        <taxon>Morganellaceae</taxon>
        <taxon>Photorhabdus</taxon>
    </lineage>
</organism>
<comment type="function">
    <text evidence="1">Catalyzes the transfer of a phosphate group to glutamate to form L-glutamate 5-phosphate.</text>
</comment>
<comment type="catalytic activity">
    <reaction evidence="1">
        <text>L-glutamate + ATP = L-glutamyl 5-phosphate + ADP</text>
        <dbReference type="Rhea" id="RHEA:14877"/>
        <dbReference type="ChEBI" id="CHEBI:29985"/>
        <dbReference type="ChEBI" id="CHEBI:30616"/>
        <dbReference type="ChEBI" id="CHEBI:58274"/>
        <dbReference type="ChEBI" id="CHEBI:456216"/>
        <dbReference type="EC" id="2.7.2.11"/>
    </reaction>
</comment>
<comment type="pathway">
    <text evidence="1">Amino-acid biosynthesis; L-proline biosynthesis; L-glutamate 5-semialdehyde from L-glutamate: step 1/2.</text>
</comment>
<comment type="subcellular location">
    <subcellularLocation>
        <location evidence="1">Cytoplasm</location>
    </subcellularLocation>
</comment>
<comment type="similarity">
    <text evidence="1">Belongs to the glutamate 5-kinase family.</text>
</comment>
<keyword id="KW-0028">Amino-acid biosynthesis</keyword>
<keyword id="KW-0067">ATP-binding</keyword>
<keyword id="KW-0963">Cytoplasm</keyword>
<keyword id="KW-0418">Kinase</keyword>
<keyword id="KW-0547">Nucleotide-binding</keyword>
<keyword id="KW-0641">Proline biosynthesis</keyword>
<keyword id="KW-1185">Reference proteome</keyword>
<keyword id="KW-0808">Transferase</keyword>
<evidence type="ECO:0000255" key="1">
    <source>
        <dbReference type="HAMAP-Rule" id="MF_00456"/>
    </source>
</evidence>
<name>PROB_PHOLL</name>
<gene>
    <name evidence="1" type="primary">proB</name>
    <name type="ordered locus">plu1243</name>
</gene>